<protein>
    <recommendedName>
        <fullName>Neurolysin, mitochondrial</fullName>
        <ecNumber evidence="1">3.4.24.16</ecNumber>
    </recommendedName>
    <alternativeName>
        <fullName>Endopeptidase 24.16</fullName>
    </alternativeName>
    <alternativeName>
        <fullName>Microsomal endopeptidase</fullName>
        <shortName>MEP</shortName>
    </alternativeName>
    <alternativeName>
        <fullName>Mitochondrial oligopeptidase M</fullName>
    </alternativeName>
    <alternativeName>
        <fullName>Neurotensin endopeptidase</fullName>
    </alternativeName>
    <alternativeName>
        <fullName>Soluble angiotensin-binding protein</fullName>
        <shortName>SABP</shortName>
    </alternativeName>
</protein>
<comment type="function">
    <text evidence="1">Hydrolyzes oligopeptides such as neurotensin, bradykinin and dynorphin A. Acts as a regulator of cannabinoid signaling pathway by mediating degradation of hemopressin, an antagonist peptide of the cannabinoid receptor CNR1.</text>
</comment>
<comment type="catalytic activity">
    <reaction evidence="1">
        <text>Preferential cleavage in neurotensin: 10-Pro-|-Tyr-11.</text>
        <dbReference type="EC" id="3.4.24.16"/>
    </reaction>
</comment>
<comment type="cofactor">
    <cofactor evidence="2">
        <name>Zn(2+)</name>
        <dbReference type="ChEBI" id="CHEBI:29105"/>
    </cofactor>
    <text evidence="2">Binds 1 zinc ion per subunit.</text>
</comment>
<comment type="subcellular location">
    <molecule>Isoform 1</molecule>
    <subcellularLocation>
        <location evidence="6">Mitochondrion</location>
    </subcellularLocation>
</comment>
<comment type="subcellular location">
    <molecule>Isoform 2</molecule>
    <subcellularLocation>
        <location evidence="6">Cytoplasm</location>
    </subcellularLocation>
</comment>
<comment type="subcellular location">
    <molecule>Isoform 3</molecule>
    <subcellularLocation>
        <location evidence="6">Cytoplasm</location>
    </subcellularLocation>
</comment>
<comment type="subcellular location">
    <molecule>Isoform 4</molecule>
    <subcellularLocation>
        <location evidence="6">Cytoplasm</location>
    </subcellularLocation>
</comment>
<comment type="subcellular location">
    <molecule>Isoform 5</molecule>
    <subcellularLocation>
        <location evidence="6">Cytoplasm</location>
    </subcellularLocation>
</comment>
<comment type="alternative products">
    <event type="alternative splicing"/>
    <isoform>
        <id>Q02038-1</id>
        <name>1</name>
        <sequence type="displayed"/>
    </isoform>
    <isoform>
        <id>Q02038-2</id>
        <name>2</name>
        <sequence type="described" ref="VSP_019392"/>
    </isoform>
    <isoform>
        <id>Q02038-3</id>
        <name>3</name>
        <name>3'</name>
        <sequence type="described" ref="VSP_019390"/>
    </isoform>
    <isoform>
        <id>Q02038-4</id>
        <name>4</name>
        <name>1'</name>
        <sequence type="described" ref="VSP_019393 VSP_019394"/>
    </isoform>
    <isoform>
        <id>Q02038-5</id>
        <name>5</name>
        <name>2'</name>
        <sequence type="described" ref="VSP_019391 VSP_019395"/>
    </isoform>
</comment>
<comment type="tissue specificity">
    <text evidence="5">Predominantly expressed in the liver, kidney and adrenal gland.</text>
</comment>
<comment type="miscellaneous">
    <molecule>Isoform 4</molecule>
    <text evidence="7">Truncated due to inclusion of exon 4 which leads to premature stop codon.</text>
</comment>
<comment type="miscellaneous">
    <molecule>Isoform 5</molecule>
    <text evidence="7">Truncated due to inclusion of exon 4 which leads to premature stop codon.</text>
</comment>
<comment type="similarity">
    <text evidence="7">Belongs to the peptidase M3 family.</text>
</comment>
<gene>
    <name type="primary">NLN</name>
</gene>
<accession>Q02038</accession>
<accession>P79433</accession>
<accession>Q7JK54</accession>
<proteinExistence type="evidence at protein level"/>
<dbReference type="EC" id="3.4.24.16" evidence="1"/>
<dbReference type="EMBL" id="D11336">
    <property type="protein sequence ID" value="BAA01949.1"/>
    <property type="molecule type" value="mRNA"/>
</dbReference>
<dbReference type="EMBL" id="AB000170">
    <property type="protein sequence ID" value="BAA19060.1"/>
    <property type="molecule type" value="mRNA"/>
</dbReference>
<dbReference type="EMBL" id="AB000170">
    <property type="protein sequence ID" value="BAA19061.1"/>
    <property type="molecule type" value="mRNA"/>
</dbReference>
<dbReference type="EMBL" id="AB000171">
    <property type="protein sequence ID" value="BAA19062.1"/>
    <property type="molecule type" value="mRNA"/>
</dbReference>
<dbReference type="EMBL" id="AB000172">
    <property type="protein sequence ID" value="BAA19063.1"/>
    <property type="molecule type" value="mRNA"/>
</dbReference>
<dbReference type="EMBL" id="AB000172">
    <property type="protein sequence ID" value="BAA19064.1"/>
    <property type="molecule type" value="mRNA"/>
</dbReference>
<dbReference type="EMBL" id="AB000173">
    <property type="protein sequence ID" value="BAA19065.1"/>
    <property type="molecule type" value="mRNA"/>
</dbReference>
<dbReference type="EMBL" id="AB000174">
    <property type="protein sequence ID" value="BAA19066.1"/>
    <property type="molecule type" value="mRNA"/>
</dbReference>
<dbReference type="EMBL" id="AB000175">
    <property type="protein sequence ID" value="BAA19067.1"/>
    <property type="molecule type" value="mRNA"/>
</dbReference>
<dbReference type="EMBL" id="AB000425">
    <property type="protein sequence ID" value="BAA19104.1"/>
    <property type="molecule type" value="Genomic_DNA"/>
</dbReference>
<dbReference type="EMBL" id="AB000425">
    <property type="protein sequence ID" value="BAA19105.1"/>
    <property type="molecule type" value="Genomic_DNA"/>
</dbReference>
<dbReference type="EMBL" id="AB000425">
    <property type="protein sequence ID" value="BAA19106.1"/>
    <property type="molecule type" value="Genomic_DNA"/>
</dbReference>
<dbReference type="PIR" id="A43411">
    <property type="entry name" value="A43411"/>
</dbReference>
<dbReference type="RefSeq" id="NP_999524.1">
    <molecule id="Q02038-1"/>
    <property type="nucleotide sequence ID" value="NM_214359.2"/>
</dbReference>
<dbReference type="RefSeq" id="XP_005654268.1">
    <property type="nucleotide sequence ID" value="XM_005654211.2"/>
</dbReference>
<dbReference type="RefSeq" id="XP_005654269.1">
    <property type="nucleotide sequence ID" value="XM_005654212.2"/>
</dbReference>
<dbReference type="RefSeq" id="XP_005672546.1">
    <molecule id="Q02038-3"/>
    <property type="nucleotide sequence ID" value="XM_005672489.3"/>
</dbReference>
<dbReference type="RefSeq" id="XP_005672547.1">
    <molecule id="Q02038-3"/>
    <property type="nucleotide sequence ID" value="XM_005672490.3"/>
</dbReference>
<dbReference type="RefSeq" id="XP_005672548.1">
    <molecule id="Q02038-3"/>
    <property type="nucleotide sequence ID" value="XM_005672491.3"/>
</dbReference>
<dbReference type="RefSeq" id="XP_005672549.1">
    <molecule id="Q02038-3"/>
    <property type="nucleotide sequence ID" value="XM_005672492.3"/>
</dbReference>
<dbReference type="SMR" id="Q02038"/>
<dbReference type="FunCoup" id="Q02038">
    <property type="interactions" value="960"/>
</dbReference>
<dbReference type="STRING" id="9823.ENSSSCP00000056095"/>
<dbReference type="MEROPS" id="M03.002"/>
<dbReference type="GlyGen" id="Q02038">
    <property type="glycosylation" value="1 site"/>
</dbReference>
<dbReference type="PaxDb" id="9823-ENSSSCP00000017773"/>
<dbReference type="PeptideAtlas" id="Q02038"/>
<dbReference type="Ensembl" id="ENSSSCT00045059491.1">
    <molecule id="Q02038-3"/>
    <property type="protein sequence ID" value="ENSSSCP00045041710.1"/>
    <property type="gene ID" value="ENSSSCG00045031968.1"/>
</dbReference>
<dbReference type="Ensembl" id="ENSSSCT00045059584.1">
    <molecule id="Q02038-1"/>
    <property type="protein sequence ID" value="ENSSSCP00045041791.1"/>
    <property type="gene ID" value="ENSSSCG00045031968.1"/>
</dbReference>
<dbReference type="Ensembl" id="ENSSSCT00045059900.1">
    <molecule id="Q02038-3"/>
    <property type="protein sequence ID" value="ENSSSCP00045042044.1"/>
    <property type="gene ID" value="ENSSSCG00045031968.1"/>
</dbReference>
<dbReference type="Ensembl" id="ENSSSCT00045059985.1">
    <molecule id="Q02038-3"/>
    <property type="protein sequence ID" value="ENSSSCP00045042112.1"/>
    <property type="gene ID" value="ENSSSCG00045031968.1"/>
</dbReference>
<dbReference type="Ensembl" id="ENSSSCT00055039328.1">
    <molecule id="Q02038-1"/>
    <property type="protein sequence ID" value="ENSSSCP00055031280.1"/>
    <property type="gene ID" value="ENSSSCG00055017425.1"/>
</dbReference>
<dbReference type="Ensembl" id="ENSSSCT00055039770.1">
    <molecule id="Q02038-3"/>
    <property type="protein sequence ID" value="ENSSSCP00055031634.1"/>
    <property type="gene ID" value="ENSSSCG00055017425.1"/>
</dbReference>
<dbReference type="Ensembl" id="ENSSSCT00065039587.1">
    <molecule id="Q02038-3"/>
    <property type="protein sequence ID" value="ENSSSCP00065016753.1"/>
    <property type="gene ID" value="ENSSSCG00065029069.1"/>
</dbReference>
<dbReference type="Ensembl" id="ENSSSCT00065039591.1">
    <molecule id="Q02038-1"/>
    <property type="protein sequence ID" value="ENSSSCP00065016755.1"/>
    <property type="gene ID" value="ENSSSCG00065029069.1"/>
</dbReference>
<dbReference type="Ensembl" id="ENSSSCT00065039602.1">
    <molecule id="Q02038-3"/>
    <property type="protein sequence ID" value="ENSSSCP00065016762.1"/>
    <property type="gene ID" value="ENSSSCG00065029069.1"/>
</dbReference>
<dbReference type="Ensembl" id="ENSSSCT00065039610.1">
    <molecule id="Q02038-3"/>
    <property type="protein sequence ID" value="ENSSSCP00065016765.1"/>
    <property type="gene ID" value="ENSSSCG00065029069.1"/>
</dbReference>
<dbReference type="Ensembl" id="ENSSSCT00110022821">
    <molecule id="Q02038-1"/>
    <property type="protein sequence ID" value="ENSSSCP00110015514"/>
    <property type="gene ID" value="ENSSSCG00110011771"/>
</dbReference>
<dbReference type="GeneID" id="397646"/>
<dbReference type="KEGG" id="ssc:397646"/>
<dbReference type="CTD" id="57486"/>
<dbReference type="eggNOG" id="KOG2089">
    <property type="taxonomic scope" value="Eukaryota"/>
</dbReference>
<dbReference type="HOGENOM" id="CLU_001805_2_0_1"/>
<dbReference type="InParanoid" id="Q02038"/>
<dbReference type="OMA" id="RSGAWCS"/>
<dbReference type="OrthoDB" id="534666at2759"/>
<dbReference type="BRENDA" id="3.4.24.16">
    <property type="organism ID" value="6170"/>
</dbReference>
<dbReference type="Reactome" id="R-SSC-375276">
    <property type="pathway name" value="Peptide ligand-binding receptors"/>
</dbReference>
<dbReference type="Proteomes" id="UP000008227">
    <property type="component" value="Unplaced"/>
</dbReference>
<dbReference type="Proteomes" id="UP000314985">
    <property type="component" value="Unplaced"/>
</dbReference>
<dbReference type="Proteomes" id="UP000694570">
    <property type="component" value="Unplaced"/>
</dbReference>
<dbReference type="Proteomes" id="UP000694571">
    <property type="component" value="Unplaced"/>
</dbReference>
<dbReference type="Proteomes" id="UP000694720">
    <property type="component" value="Unplaced"/>
</dbReference>
<dbReference type="Proteomes" id="UP000694722">
    <property type="component" value="Unplaced"/>
</dbReference>
<dbReference type="Proteomes" id="UP000694723">
    <property type="component" value="Unplaced"/>
</dbReference>
<dbReference type="Proteomes" id="UP000694724">
    <property type="component" value="Unplaced"/>
</dbReference>
<dbReference type="Proteomes" id="UP000694725">
    <property type="component" value="Unplaced"/>
</dbReference>
<dbReference type="Proteomes" id="UP000694726">
    <property type="component" value="Unplaced"/>
</dbReference>
<dbReference type="Proteomes" id="UP000694727">
    <property type="component" value="Unplaced"/>
</dbReference>
<dbReference type="Proteomes" id="UP000694728">
    <property type="component" value="Unplaced"/>
</dbReference>
<dbReference type="Bgee" id="ENSSSCG00000016778">
    <property type="expression patterns" value="Expressed in adult mammalian kidney and 46 other cell types or tissues"/>
</dbReference>
<dbReference type="ExpressionAtlas" id="Q02038">
    <property type="expression patterns" value="baseline and differential"/>
</dbReference>
<dbReference type="GO" id="GO:0005829">
    <property type="term" value="C:cytosol"/>
    <property type="evidence" value="ECO:0000314"/>
    <property type="project" value="UniProtKB"/>
</dbReference>
<dbReference type="GO" id="GO:0005758">
    <property type="term" value="C:mitochondrial intermembrane space"/>
    <property type="evidence" value="ECO:0000318"/>
    <property type="project" value="GO_Central"/>
</dbReference>
<dbReference type="GO" id="GO:0005739">
    <property type="term" value="C:mitochondrion"/>
    <property type="evidence" value="ECO:0000314"/>
    <property type="project" value="UniProtKB"/>
</dbReference>
<dbReference type="GO" id="GO:0004175">
    <property type="term" value="F:endopeptidase activity"/>
    <property type="evidence" value="ECO:0000304"/>
    <property type="project" value="UniProtKB"/>
</dbReference>
<dbReference type="GO" id="GO:0046872">
    <property type="term" value="F:metal ion binding"/>
    <property type="evidence" value="ECO:0007669"/>
    <property type="project" value="UniProtKB-KW"/>
</dbReference>
<dbReference type="GO" id="GO:0004222">
    <property type="term" value="F:metalloendopeptidase activity"/>
    <property type="evidence" value="ECO:0000318"/>
    <property type="project" value="GO_Central"/>
</dbReference>
<dbReference type="GO" id="GO:0006518">
    <property type="term" value="P:peptide metabolic process"/>
    <property type="evidence" value="ECO:0000318"/>
    <property type="project" value="GO_Central"/>
</dbReference>
<dbReference type="GO" id="GO:0006508">
    <property type="term" value="P:proteolysis"/>
    <property type="evidence" value="ECO:0000318"/>
    <property type="project" value="GO_Central"/>
</dbReference>
<dbReference type="CDD" id="cd06455">
    <property type="entry name" value="M3A_TOP"/>
    <property type="match status" value="1"/>
</dbReference>
<dbReference type="FunFam" id="1.20.1050.40:FF:000001">
    <property type="entry name" value="Thimet oligopeptidase 1"/>
    <property type="match status" value="1"/>
</dbReference>
<dbReference type="FunFam" id="3.40.390.10:FF:000006">
    <property type="entry name" value="Thimet oligopeptidase 1"/>
    <property type="match status" value="1"/>
</dbReference>
<dbReference type="Gene3D" id="3.40.390.10">
    <property type="entry name" value="Collagenase (Catalytic Domain)"/>
    <property type="match status" value="1"/>
</dbReference>
<dbReference type="Gene3D" id="1.20.1050.40">
    <property type="entry name" value="Endopeptidase. Chain P, domain 1"/>
    <property type="match status" value="1"/>
</dbReference>
<dbReference type="Gene3D" id="1.10.1370.10">
    <property type="entry name" value="Neurolysin, domain 3"/>
    <property type="match status" value="1"/>
</dbReference>
<dbReference type="InterPro" id="IPR024079">
    <property type="entry name" value="MetalloPept_cat_dom_sf"/>
</dbReference>
<dbReference type="InterPro" id="IPR024077">
    <property type="entry name" value="Neurolysin/TOP_dom2"/>
</dbReference>
<dbReference type="InterPro" id="IPR024080">
    <property type="entry name" value="Neurolysin/TOP_N"/>
</dbReference>
<dbReference type="InterPro" id="IPR045090">
    <property type="entry name" value="Pept_M3A_M3B"/>
</dbReference>
<dbReference type="InterPro" id="IPR001567">
    <property type="entry name" value="Pept_M3A_M3B_dom"/>
</dbReference>
<dbReference type="PANTHER" id="PTHR11804:SF44">
    <property type="entry name" value="NEUROLYSIN, MITOCHONDRIAL"/>
    <property type="match status" value="1"/>
</dbReference>
<dbReference type="PANTHER" id="PTHR11804">
    <property type="entry name" value="PROTEASE M3 THIMET OLIGOPEPTIDASE-RELATED"/>
    <property type="match status" value="1"/>
</dbReference>
<dbReference type="Pfam" id="PF01432">
    <property type="entry name" value="Peptidase_M3"/>
    <property type="match status" value="1"/>
</dbReference>
<dbReference type="SUPFAM" id="SSF55486">
    <property type="entry name" value="Metalloproteases ('zincins'), catalytic domain"/>
    <property type="match status" value="1"/>
</dbReference>
<dbReference type="PROSITE" id="PS00142">
    <property type="entry name" value="ZINC_PROTEASE"/>
    <property type="match status" value="1"/>
</dbReference>
<name>NEUL_PIG</name>
<evidence type="ECO:0000250" key="1">
    <source>
        <dbReference type="UniProtKB" id="P42676"/>
    </source>
</evidence>
<evidence type="ECO:0000250" key="2">
    <source>
        <dbReference type="UniProtKB" id="P52888"/>
    </source>
</evidence>
<evidence type="ECO:0000250" key="3">
    <source>
        <dbReference type="UniProtKB" id="Q9BYT8"/>
    </source>
</evidence>
<evidence type="ECO:0000255" key="4">
    <source>
        <dbReference type="PROSITE-ProRule" id="PRU10095"/>
    </source>
</evidence>
<evidence type="ECO:0000269" key="5">
    <source>
    </source>
</evidence>
<evidence type="ECO:0000269" key="6">
    <source>
    </source>
</evidence>
<evidence type="ECO:0000305" key="7"/>
<keyword id="KW-0007">Acetylation</keyword>
<keyword id="KW-0025">Alternative splicing</keyword>
<keyword id="KW-0963">Cytoplasm</keyword>
<keyword id="KW-0903">Direct protein sequencing</keyword>
<keyword id="KW-0378">Hydrolase</keyword>
<keyword id="KW-0479">Metal-binding</keyword>
<keyword id="KW-0482">Metalloprotease</keyword>
<keyword id="KW-0496">Mitochondrion</keyword>
<keyword id="KW-0645">Protease</keyword>
<keyword id="KW-1185">Reference proteome</keyword>
<keyword id="KW-0809">Transit peptide</keyword>
<keyword id="KW-0862">Zinc</keyword>
<feature type="transit peptide" description="Mitochondrion" evidence="1">
    <location>
        <begin position="1"/>
        <end position="37"/>
    </location>
</feature>
<feature type="chain" id="PRO_0000028576" description="Neurolysin, mitochondrial">
    <location>
        <begin position="38"/>
        <end position="704"/>
    </location>
</feature>
<feature type="active site" evidence="4">
    <location>
        <position position="498"/>
    </location>
</feature>
<feature type="binding site" evidence="4">
    <location>
        <position position="497"/>
    </location>
    <ligand>
        <name>Zn(2+)</name>
        <dbReference type="ChEBI" id="CHEBI:29105"/>
        <note>catalytic</note>
    </ligand>
</feature>
<feature type="binding site" evidence="4">
    <location>
        <position position="501"/>
    </location>
    <ligand>
        <name>Zn(2+)</name>
        <dbReference type="ChEBI" id="CHEBI:29105"/>
        <note>catalytic</note>
    </ligand>
</feature>
<feature type="binding site" evidence="4">
    <location>
        <position position="504"/>
    </location>
    <ligand>
        <name>Zn(2+)</name>
        <dbReference type="ChEBI" id="CHEBI:29105"/>
        <note>catalytic</note>
    </ligand>
</feature>
<feature type="modified residue" description="N6-acetyllysine" evidence="3">
    <location>
        <position position="664"/>
    </location>
</feature>
<feature type="splice variant" id="VSP_019391" description="In isoform 5." evidence="7">
    <original>MIVRCLSAARRLHRVGGSGILLRMTLGREAMSPLQAMSSYTVDGRNVLRWDLSPEQIKRRTEELIAQTKQVYDDIGMLDIEEVTYENCLQALADVEVKYIVERTMLDFPQHVSSDKEVRAASTEADKRLSRFDIEM</original>
    <variation>MVYPEGHLARELGATFSSSAPLGGHPFPFVWDCLSCKQGDWSQARPKTNAERRSGETPLSKFHILALVPLSILPVPRQKPGCHPESLTSSTHLGWWFRDFIENDFRERSNVSSSGNVFLYCGWQKCFKMGSFTRAN</variation>
    <location>
        <begin position="1"/>
        <end position="136"/>
    </location>
</feature>
<feature type="splice variant" id="VSP_019390" description="In isoform 3." evidence="7">
    <location>
        <begin position="1"/>
        <end position="23"/>
    </location>
</feature>
<feature type="splice variant" id="VSP_019392" description="In isoform 2." evidence="7">
    <original>MIVRCLSAARRLHR</original>
    <variation>MVYPEGHLARELGATFSSSAPLGGHPFPFVWDCLSCKQGDWSQARPKTNAERRSG</variation>
    <location>
        <begin position="1"/>
        <end position="14"/>
    </location>
</feature>
<feature type="splice variant" id="VSP_019393" description="In isoform 4." evidence="7">
    <original>VGGSGILLRMTLGREAMSPLQAMSSYTVDGRNVLRWDLSPEQIKRRTEELIAQTKQVYDDIGMLDIEEVTYENCLQALADV</original>
    <variation>ETPLSKFHILALVPLSILPVPRQKPGCHPESLTSSTHLGWWFRDFIENDFRERSNVSSSGNVFLYCGWQKCFKMGSFTRAN</variation>
    <location>
        <begin position="15"/>
        <end position="95"/>
    </location>
</feature>
<feature type="splice variant" id="VSP_019394" description="In isoform 4." evidence="7">
    <location>
        <begin position="96"/>
        <end position="704"/>
    </location>
</feature>
<feature type="splice variant" id="VSP_019395" description="In isoform 5." evidence="7">
    <location>
        <begin position="137"/>
        <end position="704"/>
    </location>
</feature>
<organism>
    <name type="scientific">Sus scrofa</name>
    <name type="common">Pig</name>
    <dbReference type="NCBI Taxonomy" id="9823"/>
    <lineage>
        <taxon>Eukaryota</taxon>
        <taxon>Metazoa</taxon>
        <taxon>Chordata</taxon>
        <taxon>Craniata</taxon>
        <taxon>Vertebrata</taxon>
        <taxon>Euteleostomi</taxon>
        <taxon>Mammalia</taxon>
        <taxon>Eutheria</taxon>
        <taxon>Laurasiatheria</taxon>
        <taxon>Artiodactyla</taxon>
        <taxon>Suina</taxon>
        <taxon>Suidae</taxon>
        <taxon>Sus</taxon>
    </lineage>
</organism>
<reference key="1">
    <citation type="journal article" date="1992" name="J. Biol. Chem.">
        <title>Molecular cloning of porcine soluble angiotensin-binding protein.</title>
        <authorList>
            <person name="Sugiura N."/>
            <person name="Hagiwara H."/>
            <person name="Hirose S."/>
        </authorList>
    </citation>
    <scope>NUCLEOTIDE SEQUENCE [GENOMIC DNA]</scope>
    <scope>PARTIAL PROTEIN SEQUENCE (ISOFORM 1)</scope>
    <scope>TISSUE SPECIFICITY</scope>
    <source>
        <tissue>Heart</tissue>
        <tissue>Liver</tissue>
    </source>
</reference>
<reference key="2">
    <citation type="journal article" date="1997" name="J. Biol. Chem.">
        <title>Targeting of endopeptidase 24.16 to different subcellular compartments by alternative promoter usage.</title>
        <authorList>
            <person name="Kato A."/>
            <person name="Sugiura N."/>
            <person name="Saruta Y."/>
            <person name="Hosoiri T."/>
            <person name="Yasue H."/>
            <person name="Hirose S."/>
        </authorList>
    </citation>
    <scope>NUCLEOTIDE SEQUENCE [GENOMIC DNA / MRNA]</scope>
    <scope>ALTERNATIVE SPLICING (ISOFORMS 1; 2; 3; 4 AND 5)</scope>
    <scope>SUBCELLULAR LOCATION</scope>
    <source>
        <tissue>Liver</tissue>
    </source>
</reference>
<sequence length="704" mass="80757">MIVRCLSAARRLHRVGGSGILLRMTLGREAMSPLQAMSSYTVDGRNVLRWDLSPEQIKRRTEELIAQTKQVYDDIGMLDIEEVTYENCLQALADVEVKYIVERTMLDFPQHVSSDKEVRAASTEADKRLSRFDIEMSMREDIFLRIVRLKETCDLGKIKPEARRYLEKSVKMGKRNGLHLPEQVQNEIKAMKKRMSELCIDFNKNLNEDDTFLVFSKAELGALPDDFIDSLEKTDDNKYKITLKYPHYFPVMKKCCIPETRRKMEMAFNTRCKEENTIILQELLPLRAKVAKLLGYSTHADFVLEMNTAKSTHHVTAFLDDLSQKLKPLGEAEREFILNLKKKECEEKGFEYDGKINAWDLHYYMTQTEELKYSVDQEILKEYFPIEVVTEGLLNIYQELLGLSFEQVTDAHVWNKSVTLYTVKDKATGEVLGQFYLDLYPREGKYNHAACFGLQPGCLLPDGSRMMSVAALVVNFSQPRAGRPSLLRHDEVRTYFHEFGHVMHQICAQTDFARFSGTNVETDFVEVPSQMLENWVWDTDSLRRLSKHYKDGSPITDDLLEKLVASRLVNTGLLTLRQIVLSKVDQSLHTNTSLDAASEYAKYCTEILGVAATPGTNMPATFGHLAGGYDGQYYGYLWSEVFSMDMFYSCFKKEGIMNPEVGMKYRNLILKPGGSLDGMDMLQNFLKREPNQKAFLMSRGLHAP</sequence>